<evidence type="ECO:0000250" key="1"/>
<evidence type="ECO:0000269" key="2">
    <source>
    </source>
</evidence>
<evidence type="ECO:0000303" key="3">
    <source>
    </source>
</evidence>
<evidence type="ECO:0000305" key="4"/>
<feature type="chain" id="PRO_0000423856" description="Type II restriction enzyme AplI">
    <location>
        <begin position="1"/>
        <end position="324"/>
    </location>
</feature>
<sequence length="324" mass="37395">MSSNNPTPNLEQLMLEARQLMKDLGLPDKMQGDTPIFVLLVMLDMKPAKSWSEANNQKWGITPLMNKMRELGFKNLAPNTRENIRDDCVGQLVDAELATENPDKPRPKNSPKYCYQINQEVLYLVKKIGSADYPIALNNFLSNYQTIKHKYQAKRQSQRLNVKIAHNFSVSIAPGGQGVLIKSVLQDFCKYFNIDKVLYIDNTVDTARGYSPFIDENLINYLGIDIDKFKNSYDKPDIVLYKSDNKYLIIIEAVKTGGAINVERRDRLLSLFENVDVKLSFVNAFESFKELKRLTKEITRETHAWIMEFPDHMIHFNGDQYLFH</sequence>
<keyword id="KW-0238">DNA-binding</keyword>
<keyword id="KW-0255">Endonuclease</keyword>
<keyword id="KW-0378">Hydrolase</keyword>
<keyword id="KW-0460">Magnesium</keyword>
<keyword id="KW-0540">Nuclease</keyword>
<keyword id="KW-0680">Restriction system</keyword>
<reference key="1">
    <citation type="journal article" date="2010" name="DNA Res.">
        <title>Genomic structure of an economically important cyanobacterium, Arthrospira (Spirulina) platensis NIES-39.</title>
        <authorList>
            <person name="Fujisawa T."/>
            <person name="Narikawa R."/>
            <person name="Okamoto S."/>
            <person name="Ehira S."/>
            <person name="Yoshimura H."/>
            <person name="Suzuki I."/>
            <person name="Masuda T."/>
            <person name="Mochimaru M."/>
            <person name="Takaichi S."/>
            <person name="Awai K."/>
            <person name="Sekine M."/>
            <person name="Horikawa H."/>
            <person name="Yashiro I."/>
            <person name="Omata S."/>
            <person name="Takarada H."/>
            <person name="Katano Y."/>
            <person name="Kosugi H."/>
            <person name="Tanikawa S."/>
            <person name="Ohmori K."/>
            <person name="Sato N."/>
            <person name="Ikeuchi M."/>
            <person name="Fujita N."/>
            <person name="Ohmori M."/>
        </authorList>
    </citation>
    <scope>NUCLEOTIDE SEQUENCE [LARGE SCALE GENOMIC DNA]</scope>
    <source>
        <strain>NIES-39 / UTEX 3086 / IAM M-135</strain>
    </source>
</reference>
<reference key="2">
    <citation type="journal article" date="2003" name="Nucleic Acids Res.">
        <title>A nomenclature for restriction enzymes, DNA methyltransferases, homing endonucleases and their genes.</title>
        <authorList>
            <person name="Roberts R.J."/>
            <person name="Belfort M."/>
            <person name="Bestor T."/>
            <person name="Bhagwat A.S."/>
            <person name="Bickle T.A."/>
            <person name="Bitinaite J."/>
            <person name="Blumenthal R.M."/>
            <person name="Degtyarev S.K."/>
            <person name="Dryden D.T."/>
            <person name="Dybvig K."/>
            <person name="Firman K."/>
            <person name="Gromova E.S."/>
            <person name="Gumport R.I."/>
            <person name="Halford S.E."/>
            <person name="Hattman S."/>
            <person name="Heitman J."/>
            <person name="Hornby D.P."/>
            <person name="Janulaitis A."/>
            <person name="Jeltsch A."/>
            <person name="Josephsen J."/>
            <person name="Kiss A."/>
            <person name="Klaenhammer T.R."/>
            <person name="Kobayashi I."/>
            <person name="Kong H."/>
            <person name="Krueger D.H."/>
            <person name="Lacks S."/>
            <person name="Marinus M.G."/>
            <person name="Miyahara M."/>
            <person name="Morgan R.D."/>
            <person name="Murray N.E."/>
            <person name="Nagaraja V."/>
            <person name="Piekarowicz A."/>
            <person name="Pingoud A."/>
            <person name="Raleigh E."/>
            <person name="Rao D.N."/>
            <person name="Reich N."/>
            <person name="Repin V.E."/>
            <person name="Selker E.U."/>
            <person name="Shaw P.C."/>
            <person name="Stein D.C."/>
            <person name="Stoddard B.L."/>
            <person name="Szybalski W."/>
            <person name="Trautner T.A."/>
            <person name="Van Etten J.L."/>
            <person name="Vitor J.M."/>
            <person name="Wilson G.G."/>
            <person name="Xu S.Y."/>
        </authorList>
    </citation>
    <scope>NOMENCLATURE</scope>
    <scope>SUBTYPE</scope>
</reference>
<reference key="3">
    <citation type="journal article" date="2013" name="Biosci. Biotechnol. Biochem.">
        <title>The AplI restriction-modification system in an edible cyanobacterium, Arthrospira (Spirulina) platensis NIES-39, recognizes the nucleotide sequence 5'-CTGCAG-3'.</title>
        <authorList>
            <person name="Shiraishi H."/>
            <person name="Tabuse Y."/>
        </authorList>
    </citation>
    <scope>FUNCTION</scope>
    <scope>CATALYTIC ACTIVITY</scope>
    <scope>ACTIVITY REGULATION</scope>
    <scope>PH DEPENDENCE</scope>
    <source>
        <strain>NIES-39 / UTEX 3086 / IAM M-135</strain>
    </source>
</reference>
<comment type="function">
    <text evidence="2">A P subtype restriction enzyme that recognizes the double-stranded sequence 5'-CTGCAG-3' and cleaves after A-5.</text>
</comment>
<comment type="catalytic activity">
    <reaction evidence="2">
        <text>Endonucleolytic cleavage of DNA to give specific double-stranded fragments with terminal 5'-phosphates.</text>
        <dbReference type="EC" id="3.1.21.4"/>
    </reaction>
</comment>
<comment type="cofactor">
    <cofactor evidence="1">
        <name>Mg(2+)</name>
        <dbReference type="ChEBI" id="CHEBI:18420"/>
    </cofactor>
</comment>
<comment type="activity regulation">
    <text evidence="2">Activated by K(+) and Na(+) ions, whereas NH(4)(+) ions appear to inhibit endonuclease activity.</text>
</comment>
<comment type="biophysicochemical properties">
    <phDependence>
        <text evidence="2">Optimum pH is about 9.5.</text>
    </phDependence>
</comment>
<comment type="similarity">
    <text evidence="4">Belongs to the BsuBI/PstI type II restriction endonuclease family.</text>
</comment>
<name>T2AP_ARTPN</name>
<organism>
    <name type="scientific">Arthrospira platensis (strain NIES-39 / UTEX 3086 / IAM M-135)</name>
    <name type="common">Spirulina platensis</name>
    <dbReference type="NCBI Taxonomy" id="696747"/>
    <lineage>
        <taxon>Bacteria</taxon>
        <taxon>Bacillati</taxon>
        <taxon>Cyanobacteriota</taxon>
        <taxon>Cyanophyceae</taxon>
        <taxon>Oscillatoriophycideae</taxon>
        <taxon>Oscillatoriales</taxon>
        <taxon>Microcoleaceae</taxon>
        <taxon>Arthrospira</taxon>
    </lineage>
</organism>
<gene>
    <name type="primary">aplIR</name>
    <name type="ORF">NIES39_K04640</name>
</gene>
<accession>D4ZX34</accession>
<proteinExistence type="evidence at protein level"/>
<protein>
    <recommendedName>
        <fullName evidence="3">Type II restriction enzyme AplI</fullName>
        <shortName>R.AplI</shortName>
        <ecNumber evidence="2">3.1.21.4</ecNumber>
    </recommendedName>
    <alternativeName>
        <fullName>Endonuclease AplI</fullName>
    </alternativeName>
    <alternativeName>
        <fullName>Type-2 restriction enzyme AplI</fullName>
    </alternativeName>
</protein>
<dbReference type="EC" id="3.1.21.4" evidence="2"/>
<dbReference type="EMBL" id="AP011615">
    <property type="protein sequence ID" value="BAI92109.1"/>
    <property type="molecule type" value="Genomic_DNA"/>
</dbReference>
<dbReference type="SMR" id="D4ZX34"/>
<dbReference type="REBASE" id="25962">
    <property type="entry name" value="AplI"/>
</dbReference>
<dbReference type="KEGG" id="arp:NIES39_K04640"/>
<dbReference type="PATRIC" id="fig|696747.3.peg.2190"/>
<dbReference type="eggNOG" id="COG0827">
    <property type="taxonomic scope" value="Bacteria"/>
</dbReference>
<dbReference type="HOGENOM" id="CLU_074525_0_0_3"/>
<dbReference type="OrthoDB" id="9798907at2"/>
<dbReference type="PRO" id="PR:D4ZX34"/>
<dbReference type="GO" id="GO:0003677">
    <property type="term" value="F:DNA binding"/>
    <property type="evidence" value="ECO:0007669"/>
    <property type="project" value="UniProtKB-KW"/>
</dbReference>
<dbReference type="GO" id="GO:0000287">
    <property type="term" value="F:magnesium ion binding"/>
    <property type="evidence" value="ECO:0007669"/>
    <property type="project" value="InterPro"/>
</dbReference>
<dbReference type="GO" id="GO:0009036">
    <property type="term" value="F:type II site-specific deoxyribonuclease activity"/>
    <property type="evidence" value="ECO:0000314"/>
    <property type="project" value="UniProtKB"/>
</dbReference>
<dbReference type="GO" id="GO:0009307">
    <property type="term" value="P:DNA restriction-modification system"/>
    <property type="evidence" value="ECO:0007669"/>
    <property type="project" value="UniProtKB-KW"/>
</dbReference>
<dbReference type="Gene3D" id="3.40.1350.80">
    <property type="match status" value="1"/>
</dbReference>
<dbReference type="Gene3D" id="1.10.10.1820">
    <property type="entry name" value="BsuBI/PstI restriction endonuclease-like"/>
    <property type="match status" value="1"/>
</dbReference>
<dbReference type="InterPro" id="IPR041963">
    <property type="entry name" value="BsuBI/PstI_C_sf"/>
</dbReference>
<dbReference type="InterPro" id="IPR041454">
    <property type="entry name" value="BsuBI/PstI_N"/>
</dbReference>
<dbReference type="InterPro" id="IPR041962">
    <property type="entry name" value="BsuBI/PstI_N_sf"/>
</dbReference>
<dbReference type="InterPro" id="IPR009528">
    <property type="entry name" value="Restrct_endonuc_II_BsuBI_C"/>
</dbReference>
<dbReference type="Pfam" id="PF06616">
    <property type="entry name" value="BsuBI_PstI_RE"/>
    <property type="match status" value="1"/>
</dbReference>
<dbReference type="Pfam" id="PF17728">
    <property type="entry name" value="BsuBI_PstI_RE_N"/>
    <property type="match status" value="1"/>
</dbReference>